<feature type="chain" id="PRO_0000156115" description="Diphthine synthase">
    <location>
        <begin position="1"/>
        <end position="251"/>
    </location>
</feature>
<feature type="binding site" evidence="1">
    <location>
        <position position="9"/>
    </location>
    <ligand>
        <name>S-adenosyl-L-methionine</name>
        <dbReference type="ChEBI" id="CHEBI:59789"/>
    </ligand>
</feature>
<feature type="binding site" evidence="1">
    <location>
        <position position="84"/>
    </location>
    <ligand>
        <name>S-adenosyl-L-methionine</name>
        <dbReference type="ChEBI" id="CHEBI:59789"/>
    </ligand>
</feature>
<feature type="binding site" evidence="1">
    <location>
        <position position="87"/>
    </location>
    <ligand>
        <name>S-adenosyl-L-methionine</name>
        <dbReference type="ChEBI" id="CHEBI:59789"/>
    </ligand>
</feature>
<feature type="binding site" evidence="1">
    <location>
        <begin position="112"/>
        <end position="113"/>
    </location>
    <ligand>
        <name>S-adenosyl-L-methionine</name>
        <dbReference type="ChEBI" id="CHEBI:59789"/>
    </ligand>
</feature>
<feature type="binding site" evidence="1">
    <location>
        <position position="160"/>
    </location>
    <ligand>
        <name>S-adenosyl-L-methionine</name>
        <dbReference type="ChEBI" id="CHEBI:59789"/>
    </ligand>
</feature>
<feature type="binding site" evidence="1">
    <location>
        <position position="194"/>
    </location>
    <ligand>
        <name>S-adenosyl-L-methionine</name>
        <dbReference type="ChEBI" id="CHEBI:59789"/>
    </ligand>
</feature>
<feature type="binding site" evidence="1">
    <location>
        <position position="219"/>
    </location>
    <ligand>
        <name>S-adenosyl-L-methionine</name>
        <dbReference type="ChEBI" id="CHEBI:59789"/>
    </ligand>
</feature>
<feature type="strand" evidence="2">
    <location>
        <begin position="2"/>
        <end position="6"/>
    </location>
</feature>
<feature type="strand" evidence="2">
    <location>
        <begin position="8"/>
        <end position="11"/>
    </location>
</feature>
<feature type="helix" evidence="2">
    <location>
        <begin position="12"/>
        <end position="14"/>
    </location>
</feature>
<feature type="helix" evidence="2">
    <location>
        <begin position="17"/>
        <end position="25"/>
    </location>
</feature>
<feature type="strand" evidence="2">
    <location>
        <begin position="27"/>
        <end position="32"/>
    </location>
</feature>
<feature type="helix" evidence="2">
    <location>
        <begin position="42"/>
        <end position="49"/>
    </location>
</feature>
<feature type="strand" evidence="2">
    <location>
        <begin position="54"/>
        <end position="56"/>
    </location>
</feature>
<feature type="helix" evidence="2">
    <location>
        <begin position="58"/>
        <end position="61"/>
    </location>
</feature>
<feature type="turn" evidence="2">
    <location>
        <begin position="62"/>
        <end position="64"/>
    </location>
</feature>
<feature type="helix" evidence="2">
    <location>
        <begin position="65"/>
        <end position="72"/>
    </location>
</feature>
<feature type="strand" evidence="2">
    <location>
        <begin position="75"/>
        <end position="83"/>
    </location>
</feature>
<feature type="strand" evidence="2">
    <location>
        <begin position="87"/>
        <end position="89"/>
    </location>
</feature>
<feature type="helix" evidence="2">
    <location>
        <begin position="90"/>
        <end position="100"/>
    </location>
</feature>
<feature type="strand" evidence="2">
    <location>
        <begin position="105"/>
        <end position="108"/>
    </location>
</feature>
<feature type="helix" evidence="2">
    <location>
        <begin position="113"/>
        <end position="121"/>
    </location>
</feature>
<feature type="helix" evidence="2">
    <location>
        <begin position="125"/>
        <end position="127"/>
    </location>
</feature>
<feature type="strand" evidence="2">
    <location>
        <begin position="132"/>
        <end position="134"/>
    </location>
</feature>
<feature type="helix" evidence="2">
    <location>
        <begin position="141"/>
        <end position="151"/>
    </location>
</feature>
<feature type="strand" evidence="2">
    <location>
        <begin position="155"/>
        <end position="160"/>
    </location>
</feature>
<feature type="strand" evidence="2">
    <location>
        <begin position="163"/>
        <end position="165"/>
    </location>
</feature>
<feature type="helix" evidence="2">
    <location>
        <begin position="169"/>
        <end position="179"/>
    </location>
</feature>
<feature type="helix" evidence="2">
    <location>
        <begin position="181"/>
        <end position="185"/>
    </location>
</feature>
<feature type="strand" evidence="2">
    <location>
        <begin position="186"/>
        <end position="193"/>
    </location>
</feature>
<feature type="strand" evidence="2">
    <location>
        <begin position="196"/>
        <end position="198"/>
    </location>
</feature>
<feature type="strand" evidence="2">
    <location>
        <begin position="200"/>
        <end position="205"/>
    </location>
</feature>
<feature type="helix" evidence="2">
    <location>
        <begin position="206"/>
        <end position="211"/>
    </location>
</feature>
<feature type="strand" evidence="2">
    <location>
        <begin position="219"/>
        <end position="223"/>
    </location>
</feature>
<feature type="helix" evidence="2">
    <location>
        <begin position="230"/>
        <end position="239"/>
    </location>
</feature>
<feature type="helix" evidence="2">
    <location>
        <begin position="244"/>
        <end position="249"/>
    </location>
</feature>
<proteinExistence type="evidence at protein level"/>
<reference key="1">
    <citation type="journal article" date="1997" name="Nature">
        <title>The complete genome sequence of the hyperthermophilic, sulphate-reducing archaeon Archaeoglobus fulgidus.</title>
        <authorList>
            <person name="Klenk H.-P."/>
            <person name="Clayton R.A."/>
            <person name="Tomb J.-F."/>
            <person name="White O."/>
            <person name="Nelson K.E."/>
            <person name="Ketchum K.A."/>
            <person name="Dodson R.J."/>
            <person name="Gwinn M.L."/>
            <person name="Hickey E.K."/>
            <person name="Peterson J.D."/>
            <person name="Richardson D.L."/>
            <person name="Kerlavage A.R."/>
            <person name="Graham D.E."/>
            <person name="Kyrpides N.C."/>
            <person name="Fleischmann R.D."/>
            <person name="Quackenbush J."/>
            <person name="Lee N.H."/>
            <person name="Sutton G.G."/>
            <person name="Gill S.R."/>
            <person name="Kirkness E.F."/>
            <person name="Dougherty B.A."/>
            <person name="McKenney K."/>
            <person name="Adams M.D."/>
            <person name="Loftus B.J."/>
            <person name="Peterson S.N."/>
            <person name="Reich C.I."/>
            <person name="McNeil L.K."/>
            <person name="Badger J.H."/>
            <person name="Glodek A."/>
            <person name="Zhou L."/>
            <person name="Overbeek R."/>
            <person name="Gocayne J.D."/>
            <person name="Weidman J.F."/>
            <person name="McDonald L.A."/>
            <person name="Utterback T.R."/>
            <person name="Cotton M.D."/>
            <person name="Spriggs T."/>
            <person name="Artiach P."/>
            <person name="Kaine B.P."/>
            <person name="Sykes S.M."/>
            <person name="Sadow P.W."/>
            <person name="D'Andrea K.P."/>
            <person name="Bowman C."/>
            <person name="Fujii C."/>
            <person name="Garland S.A."/>
            <person name="Mason T.M."/>
            <person name="Olsen G.J."/>
            <person name="Fraser C.M."/>
            <person name="Smith H.O."/>
            <person name="Woese C.R."/>
            <person name="Venter J.C."/>
        </authorList>
    </citation>
    <scope>NUCLEOTIDE SEQUENCE [LARGE SCALE GENOMIC DNA]</scope>
    <source>
        <strain>ATCC 49558 / DSM 4304 / JCM 9628 / NBRC 100126 / VC-16</strain>
    </source>
</reference>
<reference key="2">
    <citation type="journal article" date="2005" name="Proteins">
        <title>Structural analysis of a set of proteins resulting from a bacterial genomics project.</title>
        <authorList>
            <person name="Badger J."/>
            <person name="Sauder J.M."/>
            <person name="Adams J.M."/>
            <person name="Antonysamy S."/>
            <person name="Bain K."/>
            <person name="Bergseid M.G."/>
            <person name="Buchanan S.G."/>
            <person name="Buchanan M.D."/>
            <person name="Batiyenko Y."/>
            <person name="Christopher J.A."/>
            <person name="Emtage S."/>
            <person name="Eroshkina A."/>
            <person name="Feil I."/>
            <person name="Furlong E.B."/>
            <person name="Gajiwala K.S."/>
            <person name="Gao X."/>
            <person name="He D."/>
            <person name="Hendle J."/>
            <person name="Huber A."/>
            <person name="Hoda K."/>
            <person name="Kearins P."/>
            <person name="Kissinger C."/>
            <person name="Laubert B."/>
            <person name="Lewis H.A."/>
            <person name="Lin J."/>
            <person name="Loomis K."/>
            <person name="Lorimer D."/>
            <person name="Louie G."/>
            <person name="Maletic M."/>
            <person name="Marsh C.D."/>
            <person name="Miller I."/>
            <person name="Molinari J."/>
            <person name="Muller-Dieckmann H.J."/>
            <person name="Newman J.M."/>
            <person name="Noland B.W."/>
            <person name="Pagarigan B."/>
            <person name="Park F."/>
            <person name="Peat T.S."/>
            <person name="Post K.W."/>
            <person name="Radojicic S."/>
            <person name="Ramos A."/>
            <person name="Romero R."/>
            <person name="Rutter M.E."/>
            <person name="Sanderson W.E."/>
            <person name="Schwinn K.D."/>
            <person name="Tresser J."/>
            <person name="Winhoven J."/>
            <person name="Wright T.A."/>
            <person name="Wu L."/>
            <person name="Xu J."/>
            <person name="Harris T.J.R."/>
        </authorList>
    </citation>
    <scope>X-RAY CRYSTALLOGRAPHY (1.75 ANGSTROMS) OF 2-251</scope>
</reference>
<accession>O29866</accession>
<organism>
    <name type="scientific">Archaeoglobus fulgidus (strain ATCC 49558 / DSM 4304 / JCM 9628 / NBRC 100126 / VC-16)</name>
    <dbReference type="NCBI Taxonomy" id="224325"/>
    <lineage>
        <taxon>Archaea</taxon>
        <taxon>Methanobacteriati</taxon>
        <taxon>Methanobacteriota</taxon>
        <taxon>Archaeoglobi</taxon>
        <taxon>Archaeoglobales</taxon>
        <taxon>Archaeoglobaceae</taxon>
        <taxon>Archaeoglobus</taxon>
    </lineage>
</organism>
<gene>
    <name evidence="1" type="primary">dphB</name>
    <name type="ordered locus">AF_0381</name>
</gene>
<name>DPHB_ARCFU</name>
<dbReference type="EC" id="2.1.1.98" evidence="1"/>
<dbReference type="EMBL" id="AE000782">
    <property type="protein sequence ID" value="AAB90855.1"/>
    <property type="molecule type" value="Genomic_DNA"/>
</dbReference>
<dbReference type="PIR" id="E69297">
    <property type="entry name" value="E69297"/>
</dbReference>
<dbReference type="PDB" id="1VHV">
    <property type="method" value="X-ray"/>
    <property type="resolution" value="1.75 A"/>
    <property type="chains" value="A/B=2-251"/>
</dbReference>
<dbReference type="PDBsum" id="1VHV"/>
<dbReference type="SMR" id="O29866"/>
<dbReference type="STRING" id="224325.AF_0381"/>
<dbReference type="PaxDb" id="224325-AF_0381"/>
<dbReference type="EnsemblBacteria" id="AAB90855">
    <property type="protein sequence ID" value="AAB90855"/>
    <property type="gene ID" value="AF_0381"/>
</dbReference>
<dbReference type="KEGG" id="afu:AF_0381"/>
<dbReference type="eggNOG" id="arCOG04161">
    <property type="taxonomic scope" value="Archaea"/>
</dbReference>
<dbReference type="HOGENOM" id="CLU_066040_0_0_2"/>
<dbReference type="OrthoDB" id="39139at2157"/>
<dbReference type="PhylomeDB" id="O29866"/>
<dbReference type="UniPathway" id="UPA00559"/>
<dbReference type="EvolutionaryTrace" id="O29866"/>
<dbReference type="Proteomes" id="UP000002199">
    <property type="component" value="Chromosome"/>
</dbReference>
<dbReference type="GO" id="GO:0004164">
    <property type="term" value="F:diphthine synthase activity"/>
    <property type="evidence" value="ECO:0007669"/>
    <property type="project" value="UniProtKB-UniRule"/>
</dbReference>
<dbReference type="GO" id="GO:0032259">
    <property type="term" value="P:methylation"/>
    <property type="evidence" value="ECO:0007669"/>
    <property type="project" value="UniProtKB-KW"/>
</dbReference>
<dbReference type="GO" id="GO:0017183">
    <property type="term" value="P:protein histidyl modification to diphthamide"/>
    <property type="evidence" value="ECO:0007669"/>
    <property type="project" value="UniProtKB-UniRule"/>
</dbReference>
<dbReference type="CDD" id="cd11647">
    <property type="entry name" value="DHP5_DphB"/>
    <property type="match status" value="1"/>
</dbReference>
<dbReference type="Gene3D" id="3.40.1010.10">
    <property type="entry name" value="Cobalt-precorrin-4 Transmethylase, Domain 1"/>
    <property type="match status" value="1"/>
</dbReference>
<dbReference type="Gene3D" id="3.30.950.10">
    <property type="entry name" value="Methyltransferase, Cobalt-precorrin-4 Transmethylase, Domain 2"/>
    <property type="match status" value="1"/>
</dbReference>
<dbReference type="HAMAP" id="MF_01084">
    <property type="entry name" value="Diphthine_synth"/>
    <property type="match status" value="1"/>
</dbReference>
<dbReference type="InterPro" id="IPR000878">
    <property type="entry name" value="4pyrrol_Mease"/>
</dbReference>
<dbReference type="InterPro" id="IPR035996">
    <property type="entry name" value="4pyrrol_Methylase_sf"/>
</dbReference>
<dbReference type="InterPro" id="IPR014777">
    <property type="entry name" value="4pyrrole_Mease_sub1"/>
</dbReference>
<dbReference type="InterPro" id="IPR014776">
    <property type="entry name" value="4pyrrole_Mease_sub2"/>
</dbReference>
<dbReference type="InterPro" id="IPR004551">
    <property type="entry name" value="Dphthn_synthase"/>
</dbReference>
<dbReference type="NCBIfam" id="TIGR00522">
    <property type="entry name" value="dph5"/>
    <property type="match status" value="1"/>
</dbReference>
<dbReference type="PANTHER" id="PTHR10882:SF0">
    <property type="entry name" value="DIPHTHINE METHYL ESTER SYNTHASE"/>
    <property type="match status" value="1"/>
</dbReference>
<dbReference type="PANTHER" id="PTHR10882">
    <property type="entry name" value="DIPHTHINE SYNTHASE"/>
    <property type="match status" value="1"/>
</dbReference>
<dbReference type="Pfam" id="PF00590">
    <property type="entry name" value="TP_methylase"/>
    <property type="match status" value="1"/>
</dbReference>
<dbReference type="PIRSF" id="PIRSF036432">
    <property type="entry name" value="Diphthine_synth"/>
    <property type="match status" value="1"/>
</dbReference>
<dbReference type="SUPFAM" id="SSF53790">
    <property type="entry name" value="Tetrapyrrole methylase"/>
    <property type="match status" value="1"/>
</dbReference>
<keyword id="KW-0002">3D-structure</keyword>
<keyword id="KW-0489">Methyltransferase</keyword>
<keyword id="KW-1185">Reference proteome</keyword>
<keyword id="KW-0949">S-adenosyl-L-methionine</keyword>
<keyword id="KW-0808">Transferase</keyword>
<evidence type="ECO:0000255" key="1">
    <source>
        <dbReference type="HAMAP-Rule" id="MF_01084"/>
    </source>
</evidence>
<evidence type="ECO:0007829" key="2">
    <source>
        <dbReference type="PDB" id="1VHV"/>
    </source>
</evidence>
<protein>
    <recommendedName>
        <fullName evidence="1">Diphthine synthase</fullName>
        <ecNumber evidence="1">2.1.1.98</ecNumber>
    </recommendedName>
    <alternativeName>
        <fullName evidence="1">Diphthamide biosynthesis methyltransferase</fullName>
    </alternativeName>
</protein>
<sequence length="251" mass="28008">MLTFVGLGLWDVKDISVKGLEAVREADEVYVEYYTSKLLSSIEEMEEFFGKRVVELERSDLEENSFRLIERAKSKSVVLLVPGDPMVATTHSAIKLEAERKGVKTRIIHGASISTAVCGLTGLHNYRFGKSATVSWHRSQTPVNVIKANRSIDAHTLLFLDLHPEPMTIGHAVENLIAEDAQMKDLYAVGIARAGSGEEVVKCDRLENLKKIDFGKPLHVMVVLAKTLHFMEFECLREFADAPAELERLVA</sequence>
<comment type="function">
    <text evidence="1">S-adenosyl-L-methionine-dependent methyltransferase that catalyzes the trimethylation of the amino group of the modified target histidine residue in translation elongation factor 2 (EF-2), to form an intermediate called diphthine. The three successive methylation reactions represent the second step of diphthamide biosynthesis.</text>
</comment>
<comment type="catalytic activity">
    <reaction evidence="1">
        <text>2-[(3S)-amino-3-carboxypropyl]-L-histidyl-[translation elongation factor 2] + 3 S-adenosyl-L-methionine = diphthine-[translation elongation factor 2] + 3 S-adenosyl-L-homocysteine + 3 H(+)</text>
        <dbReference type="Rhea" id="RHEA:36415"/>
        <dbReference type="Rhea" id="RHEA-COMP:9749"/>
        <dbReference type="Rhea" id="RHEA-COMP:10172"/>
        <dbReference type="ChEBI" id="CHEBI:15378"/>
        <dbReference type="ChEBI" id="CHEBI:57856"/>
        <dbReference type="ChEBI" id="CHEBI:59789"/>
        <dbReference type="ChEBI" id="CHEBI:73995"/>
        <dbReference type="ChEBI" id="CHEBI:82696"/>
        <dbReference type="EC" id="2.1.1.98"/>
    </reaction>
</comment>
<comment type="pathway">
    <text evidence="1">Protein modification; peptidyl-diphthamide biosynthesis.</text>
</comment>
<comment type="subunit">
    <text evidence="1">Homodimer.</text>
</comment>
<comment type="similarity">
    <text evidence="1">Belongs to the diphthine synthase family.</text>
</comment>